<comment type="function">
    <text evidence="1">Essential component of the TIM22 complex, a complex that mediates the import and insertion of multi-pass transmembrane proteins into the mitochondrial inner membrane. The TIM22 complex forms a twin-pore translocase that uses the membrane potential as external driving force (By similarity).</text>
</comment>
<comment type="subunit">
    <text evidence="1">Component of the TIM22 complex, whose core is composed of TIM22 and TIM54, associated with the 70 kDa heterohexamer composed of TIM9 and TIM10 (or TIM8 and TIM13).</text>
</comment>
<comment type="subcellular location">
    <subcellularLocation>
        <location evidence="1">Mitochondrion inner membrane</location>
        <topology evidence="1">Single-pass membrane protein</topology>
    </subcellularLocation>
</comment>
<comment type="similarity">
    <text evidence="4">Belongs to the TIM54 family.</text>
</comment>
<reference key="1">
    <citation type="journal article" date="2004" name="Nature">
        <title>Genome evolution in yeasts.</title>
        <authorList>
            <person name="Dujon B."/>
            <person name="Sherman D."/>
            <person name="Fischer G."/>
            <person name="Durrens P."/>
            <person name="Casaregola S."/>
            <person name="Lafontaine I."/>
            <person name="de Montigny J."/>
            <person name="Marck C."/>
            <person name="Neuveglise C."/>
            <person name="Talla E."/>
            <person name="Goffard N."/>
            <person name="Frangeul L."/>
            <person name="Aigle M."/>
            <person name="Anthouard V."/>
            <person name="Babour A."/>
            <person name="Barbe V."/>
            <person name="Barnay S."/>
            <person name="Blanchin S."/>
            <person name="Beckerich J.-M."/>
            <person name="Beyne E."/>
            <person name="Bleykasten C."/>
            <person name="Boisrame A."/>
            <person name="Boyer J."/>
            <person name="Cattolico L."/>
            <person name="Confanioleri F."/>
            <person name="de Daruvar A."/>
            <person name="Despons L."/>
            <person name="Fabre E."/>
            <person name="Fairhead C."/>
            <person name="Ferry-Dumazet H."/>
            <person name="Groppi A."/>
            <person name="Hantraye F."/>
            <person name="Hennequin C."/>
            <person name="Jauniaux N."/>
            <person name="Joyet P."/>
            <person name="Kachouri R."/>
            <person name="Kerrest A."/>
            <person name="Koszul R."/>
            <person name="Lemaire M."/>
            <person name="Lesur I."/>
            <person name="Ma L."/>
            <person name="Muller H."/>
            <person name="Nicaud J.-M."/>
            <person name="Nikolski M."/>
            <person name="Oztas S."/>
            <person name="Ozier-Kalogeropoulos O."/>
            <person name="Pellenz S."/>
            <person name="Potier S."/>
            <person name="Richard G.-F."/>
            <person name="Straub M.-L."/>
            <person name="Suleau A."/>
            <person name="Swennen D."/>
            <person name="Tekaia F."/>
            <person name="Wesolowski-Louvel M."/>
            <person name="Westhof E."/>
            <person name="Wirth B."/>
            <person name="Zeniou-Meyer M."/>
            <person name="Zivanovic Y."/>
            <person name="Bolotin-Fukuhara M."/>
            <person name="Thierry A."/>
            <person name="Bouchier C."/>
            <person name="Caudron B."/>
            <person name="Scarpelli C."/>
            <person name="Gaillardin C."/>
            <person name="Weissenbach J."/>
            <person name="Wincker P."/>
            <person name="Souciet J.-L."/>
        </authorList>
    </citation>
    <scope>NUCLEOTIDE SEQUENCE [LARGE SCALE GENOMIC DNA]</scope>
    <source>
        <strain>CLIB 122 / E 150</strain>
    </source>
</reference>
<organism>
    <name type="scientific">Yarrowia lipolytica (strain CLIB 122 / E 150)</name>
    <name type="common">Yeast</name>
    <name type="synonym">Candida lipolytica</name>
    <dbReference type="NCBI Taxonomy" id="284591"/>
    <lineage>
        <taxon>Eukaryota</taxon>
        <taxon>Fungi</taxon>
        <taxon>Dikarya</taxon>
        <taxon>Ascomycota</taxon>
        <taxon>Saccharomycotina</taxon>
        <taxon>Dipodascomycetes</taxon>
        <taxon>Dipodascales</taxon>
        <taxon>Dipodascales incertae sedis</taxon>
        <taxon>Yarrowia</taxon>
    </lineage>
</organism>
<protein>
    <recommendedName>
        <fullName>Mitochondrial import inner membrane translocase subunit TIM54</fullName>
    </recommendedName>
</protein>
<name>TIM54_YARLI</name>
<keyword id="KW-0472">Membrane</keyword>
<keyword id="KW-0496">Mitochondrion</keyword>
<keyword id="KW-0999">Mitochondrion inner membrane</keyword>
<keyword id="KW-0653">Protein transport</keyword>
<keyword id="KW-1185">Reference proteome</keyword>
<keyword id="KW-0811">Translocation</keyword>
<keyword id="KW-0812">Transmembrane</keyword>
<keyword id="KW-1133">Transmembrane helix</keyword>
<keyword id="KW-0813">Transport</keyword>
<proteinExistence type="inferred from homology"/>
<gene>
    <name type="primary">TIM54</name>
    <name type="ordered locus">YALI0D24343g</name>
</gene>
<accession>Q6C7Y5</accession>
<dbReference type="EMBL" id="CR382130">
    <property type="protein sequence ID" value="CAG81428.1"/>
    <property type="molecule type" value="Genomic_DNA"/>
</dbReference>
<dbReference type="RefSeq" id="XP_503227.1">
    <property type="nucleotide sequence ID" value="XM_503227.1"/>
</dbReference>
<dbReference type="SMR" id="Q6C7Y5"/>
<dbReference type="FunCoup" id="Q6C7Y5">
    <property type="interactions" value="23"/>
</dbReference>
<dbReference type="STRING" id="284591.Q6C7Y5"/>
<dbReference type="EnsemblFungi" id="CAG81428">
    <property type="protein sequence ID" value="CAG81428"/>
    <property type="gene ID" value="YALI0_D24343g"/>
</dbReference>
<dbReference type="KEGG" id="yli:2910343"/>
<dbReference type="VEuPathDB" id="FungiDB:YALI0_D24343g"/>
<dbReference type="HOGENOM" id="CLU_039097_0_0_1"/>
<dbReference type="InParanoid" id="Q6C7Y5"/>
<dbReference type="OMA" id="CAVVENM"/>
<dbReference type="OrthoDB" id="119346at4891"/>
<dbReference type="Proteomes" id="UP000001300">
    <property type="component" value="Chromosome D"/>
</dbReference>
<dbReference type="GO" id="GO:0005737">
    <property type="term" value="C:cytoplasm"/>
    <property type="evidence" value="ECO:0000318"/>
    <property type="project" value="GO_Central"/>
</dbReference>
<dbReference type="GO" id="GO:0043231">
    <property type="term" value="C:intracellular membrane-bounded organelle"/>
    <property type="evidence" value="ECO:0000318"/>
    <property type="project" value="GO_Central"/>
</dbReference>
<dbReference type="GO" id="GO:0016020">
    <property type="term" value="C:membrane"/>
    <property type="evidence" value="ECO:0000318"/>
    <property type="project" value="GO_Central"/>
</dbReference>
<dbReference type="GO" id="GO:0005743">
    <property type="term" value="C:mitochondrial inner membrane"/>
    <property type="evidence" value="ECO:0007669"/>
    <property type="project" value="UniProtKB-SubCell"/>
</dbReference>
<dbReference type="GO" id="GO:0015031">
    <property type="term" value="P:protein transport"/>
    <property type="evidence" value="ECO:0007669"/>
    <property type="project" value="UniProtKB-KW"/>
</dbReference>
<dbReference type="InterPro" id="IPR050187">
    <property type="entry name" value="Lipid_Phosphate_FormReg"/>
</dbReference>
<dbReference type="InterPro" id="IPR021056">
    <property type="entry name" value="Mt_import_IM_translocase_Tim54"/>
</dbReference>
<dbReference type="PANTHER" id="PTHR12358:SF101">
    <property type="entry name" value="MITOCHONDRIAL IMPORT INNER MEMBRANE TRANSLOCASE SUBUNIT TIM54"/>
    <property type="match status" value="1"/>
</dbReference>
<dbReference type="PANTHER" id="PTHR12358">
    <property type="entry name" value="SPHINGOSINE KINASE"/>
    <property type="match status" value="1"/>
</dbReference>
<dbReference type="Pfam" id="PF11711">
    <property type="entry name" value="Tim54"/>
    <property type="match status" value="1"/>
</dbReference>
<feature type="chain" id="PRO_0000228019" description="Mitochondrial import inner membrane translocase subunit TIM54">
    <location>
        <begin position="1"/>
        <end position="572"/>
    </location>
</feature>
<feature type="topological domain" description="Mitochondrial matrix" evidence="2">
    <location>
        <begin position="1"/>
        <end position="42"/>
    </location>
</feature>
<feature type="transmembrane region" description="Helical" evidence="2">
    <location>
        <begin position="43"/>
        <end position="59"/>
    </location>
</feature>
<feature type="topological domain" description="Mitochondrial intermembrane" evidence="2">
    <location>
        <begin position="60"/>
        <end position="572"/>
    </location>
</feature>
<feature type="region of interest" description="Disordered" evidence="3">
    <location>
        <begin position="1"/>
        <end position="21"/>
    </location>
</feature>
<feature type="region of interest" description="Disordered" evidence="3">
    <location>
        <begin position="185"/>
        <end position="221"/>
    </location>
</feature>
<feature type="region of interest" description="Disordered" evidence="3">
    <location>
        <begin position="363"/>
        <end position="404"/>
    </location>
</feature>
<feature type="compositionally biased region" description="Polar residues" evidence="3">
    <location>
        <begin position="192"/>
        <end position="205"/>
    </location>
</feature>
<feature type="compositionally biased region" description="Polar residues" evidence="3">
    <location>
        <begin position="212"/>
        <end position="221"/>
    </location>
</feature>
<feature type="compositionally biased region" description="Polar residues" evidence="3">
    <location>
        <begin position="363"/>
        <end position="376"/>
    </location>
</feature>
<sequence>MADETAPKSSKPTAEAAPKKTGYTNPALRAMGIRQLRLPSRNWMIFWTVVGTISGGIYYDRHERKKVRQQYKDAVAYLGERPLGGLEIPRKITVFVAPPPGDYLDHVLTHFRAYIKPILTAAALDFEVKQESRQGEIRYVVAEGIRNYRREQMGLPKVPSRLMVDEEEYNKAVAEQNAEVERLKAGREKHTNPNPTFQAFNSINNRPGAPSSPDSQPEEQMSISVAGTIAQEQLDKEITSKLEFNPESGVICVGRGAYKEYLAGLHEGWLGPLEDPRPDEDNRKVYEEFPNREKDDDDALGLVKTPVEEPTTAVQNVQSVSEHLNSHPEMVKDVSETISHSGDVTAVTDVEQTAAGPVDVVSETASTHDTPAASDNKTPKPLSEMSPSEWDPKAPLPEIKRKPVPKPYIRPEEYSEAELSEFYASGFENASTAHSTVSSNINQQPNDLNSPAGSGTAFVEQFFFSPIAVIPHRHIMGFMNTPLRIARYFNKRAVADEVGAATVVAVTGDTRPFDVKTDPDLLVSEEYDWPSKWVKKGQDNGSEWVQPVVVDQRVMEKVKVYQPKGEGESELK</sequence>
<evidence type="ECO:0000250" key="1"/>
<evidence type="ECO:0000255" key="2"/>
<evidence type="ECO:0000256" key="3">
    <source>
        <dbReference type="SAM" id="MobiDB-lite"/>
    </source>
</evidence>
<evidence type="ECO:0000305" key="4"/>